<name>H9F01_CYRHA</name>
<dbReference type="EMBL" id="GU293095">
    <property type="protein sequence ID" value="ADB56911.1"/>
    <property type="molecule type" value="Genomic_DNA"/>
</dbReference>
<dbReference type="SMR" id="D2Y2L8"/>
<dbReference type="ArachnoServer" id="AS001517">
    <property type="toxin name" value="omega-theraphotoxin-Hhn1e"/>
</dbReference>
<dbReference type="GO" id="GO:0005576">
    <property type="term" value="C:extracellular region"/>
    <property type="evidence" value="ECO:0007669"/>
    <property type="project" value="UniProtKB-SubCell"/>
</dbReference>
<dbReference type="GO" id="GO:0008200">
    <property type="term" value="F:ion channel inhibitor activity"/>
    <property type="evidence" value="ECO:0007669"/>
    <property type="project" value="InterPro"/>
</dbReference>
<dbReference type="GO" id="GO:0090729">
    <property type="term" value="F:toxin activity"/>
    <property type="evidence" value="ECO:0007669"/>
    <property type="project" value="UniProtKB-KW"/>
</dbReference>
<dbReference type="InterPro" id="IPR011696">
    <property type="entry name" value="Huwentoxin-1"/>
</dbReference>
<dbReference type="Pfam" id="PF07740">
    <property type="entry name" value="Toxin_12"/>
    <property type="match status" value="1"/>
</dbReference>
<dbReference type="SUPFAM" id="SSF57059">
    <property type="entry name" value="omega toxin-like"/>
    <property type="match status" value="1"/>
</dbReference>
<protein>
    <recommendedName>
        <fullName>Omega-theraphotoxin-Hhn1e</fullName>
        <shortName>Omega-TRTX-Hhn1e</shortName>
    </recommendedName>
    <alternativeName>
        <fullName>Hainantoxin-IX-6</fullName>
        <shortName>HNTX-IX-6</shortName>
    </alternativeName>
</protein>
<organism>
    <name type="scientific">Cyriopagopus hainanus</name>
    <name type="common">Chinese bird spider</name>
    <name type="synonym">Haplopelma hainanum</name>
    <dbReference type="NCBI Taxonomy" id="209901"/>
    <lineage>
        <taxon>Eukaryota</taxon>
        <taxon>Metazoa</taxon>
        <taxon>Ecdysozoa</taxon>
        <taxon>Arthropoda</taxon>
        <taxon>Chelicerata</taxon>
        <taxon>Arachnida</taxon>
        <taxon>Araneae</taxon>
        <taxon>Mygalomorphae</taxon>
        <taxon>Theraphosidae</taxon>
        <taxon>Haplopelma</taxon>
    </lineage>
</organism>
<reference key="1">
    <citation type="journal article" date="2010" name="J. Proteome Res.">
        <title>Molecular diversification of peptide toxins from the tarantula Haplopelma hainanum (Ornithoctonus hainana) venom based on transcriptomic, peptidomic, and genomic analyses.</title>
        <authorList>
            <person name="Tang X."/>
            <person name="Zhang Y."/>
            <person name="Hu W."/>
            <person name="Xu D."/>
            <person name="Tao H."/>
            <person name="Yang X."/>
            <person name="Li Y."/>
            <person name="Jiang L."/>
            <person name="Liang S."/>
        </authorList>
    </citation>
    <scope>NUCLEOTIDE SEQUENCE [LARGE SCALE GENOMIC DNA]</scope>
    <source>
        <tissue>Venom gland</tissue>
    </source>
</reference>
<keyword id="KW-1015">Disulfide bond</keyword>
<keyword id="KW-0872">Ion channel impairing toxin</keyword>
<keyword id="KW-0960">Knottin</keyword>
<keyword id="KW-0964">Secreted</keyword>
<keyword id="KW-0732">Signal</keyword>
<keyword id="KW-0800">Toxin</keyword>
<accession>D2Y2L8</accession>
<feature type="signal peptide" evidence="2">
    <location>
        <begin position="1"/>
        <end position="21"/>
    </location>
</feature>
<feature type="propeptide" id="PRO_0000400669" evidence="1">
    <location>
        <begin position="22"/>
        <end position="50"/>
    </location>
</feature>
<feature type="peptide" id="PRO_0000400670" description="Omega-theraphotoxin-Hhn1e">
    <location>
        <begin position="51"/>
        <end position="86"/>
    </location>
</feature>
<feature type="disulfide bond" evidence="1">
    <location>
        <begin position="52"/>
        <end position="66"/>
    </location>
</feature>
<feature type="disulfide bond" evidence="1">
    <location>
        <begin position="65"/>
        <end position="78"/>
    </location>
</feature>
<proteinExistence type="inferred from homology"/>
<sequence length="86" mass="9668">MKSIVFVALFGLALLAVVCSASEGAHKELLKEVVRAMVVDKTDAVQAEERECRWYLGGCSQDGDCCKHLQRHSNYEWCIWDGTFSK</sequence>
<comment type="function">
    <text evidence="1">Ion channel inhibitor.</text>
</comment>
<comment type="subcellular location">
    <subcellularLocation>
        <location evidence="1">Secreted</location>
    </subcellularLocation>
</comment>
<comment type="tissue specificity">
    <text>Expressed by the venom gland.</text>
</comment>
<comment type="domain">
    <text evidence="1">The presence of a 'disulfide through disulfide knot' structurally defines this protein as a knottin.</text>
</comment>
<comment type="similarity">
    <text evidence="3">Belongs to the neurotoxin 10 (Hwtx-1) family. 17 (Hntx-9) subfamily.</text>
</comment>
<comment type="caution">
    <text evidence="3">While it is structurally defined as a knottin it lacks the conserved Cys residue in position 71.</text>
</comment>
<evidence type="ECO:0000250" key="1"/>
<evidence type="ECO:0000255" key="2"/>
<evidence type="ECO:0000305" key="3"/>